<keyword id="KW-0030">Aminoacyl-tRNA synthetase</keyword>
<keyword id="KW-0067">ATP-binding</keyword>
<keyword id="KW-0963">Cytoplasm</keyword>
<keyword id="KW-0436">Ligase</keyword>
<keyword id="KW-0460">Magnesium</keyword>
<keyword id="KW-0479">Metal-binding</keyword>
<keyword id="KW-0547">Nucleotide-binding</keyword>
<keyword id="KW-0648">Protein biosynthesis</keyword>
<keyword id="KW-1185">Reference proteome</keyword>
<protein>
    <recommendedName>
        <fullName evidence="1">Phenylalanine--tRNA ligase alpha subunit</fullName>
        <ecNumber evidence="1">6.1.1.20</ecNumber>
    </recommendedName>
    <alternativeName>
        <fullName evidence="1">Phenylalanyl-tRNA synthetase alpha subunit</fullName>
        <shortName evidence="1">PheRS</shortName>
    </alternativeName>
</protein>
<comment type="catalytic activity">
    <reaction evidence="1">
        <text>tRNA(Phe) + L-phenylalanine + ATP = L-phenylalanyl-tRNA(Phe) + AMP + diphosphate + H(+)</text>
        <dbReference type="Rhea" id="RHEA:19413"/>
        <dbReference type="Rhea" id="RHEA-COMP:9668"/>
        <dbReference type="Rhea" id="RHEA-COMP:9699"/>
        <dbReference type="ChEBI" id="CHEBI:15378"/>
        <dbReference type="ChEBI" id="CHEBI:30616"/>
        <dbReference type="ChEBI" id="CHEBI:33019"/>
        <dbReference type="ChEBI" id="CHEBI:58095"/>
        <dbReference type="ChEBI" id="CHEBI:78442"/>
        <dbReference type="ChEBI" id="CHEBI:78531"/>
        <dbReference type="ChEBI" id="CHEBI:456215"/>
        <dbReference type="EC" id="6.1.1.20"/>
    </reaction>
</comment>
<comment type="cofactor">
    <cofactor evidence="1">
        <name>Mg(2+)</name>
        <dbReference type="ChEBI" id="CHEBI:18420"/>
    </cofactor>
    <text evidence="1">Binds 2 magnesium ions per tetramer.</text>
</comment>
<comment type="subunit">
    <text evidence="1">Tetramer of two alpha and two beta subunits.</text>
</comment>
<comment type="subcellular location">
    <subcellularLocation>
        <location evidence="1">Cytoplasm</location>
    </subcellularLocation>
</comment>
<comment type="similarity">
    <text evidence="1">Belongs to the class-II aminoacyl-tRNA synthetase family. Phe-tRNA synthetase alpha subunit type 1 subfamily.</text>
</comment>
<organism>
    <name type="scientific">Desulfotalea psychrophila (strain LSv54 / DSM 12343)</name>
    <dbReference type="NCBI Taxonomy" id="177439"/>
    <lineage>
        <taxon>Bacteria</taxon>
        <taxon>Pseudomonadati</taxon>
        <taxon>Thermodesulfobacteriota</taxon>
        <taxon>Desulfobulbia</taxon>
        <taxon>Desulfobulbales</taxon>
        <taxon>Desulfocapsaceae</taxon>
        <taxon>Desulfotalea</taxon>
    </lineage>
</organism>
<sequence length="338" mass="38104">MEQELQNLENEAKASLTAICASESLEEFRIKYLGRKGLFTTVMRQLGSAPAEDRPRLGQLANTIKAQLEEQFEEKRSSLSQQTSSSDTYQSLPDLTLPGRQPAAGNLHPVTQVMQEVCAIFEAMGFSVAEGPDVEQDYYNFEALNIPAHHPARDMHDTFYVSGSTLLRTHTSPMQARVMEKQDPPLRMIAPGKVYRCDSDITHTPMFHQVEGLLVDKNISFADLKGVLTLFLQKIFKQDLPVRFRPSFFPFTEPSAEVDIACVMCGGKGCRVCKKTGWLEILGAGMVDPEVFKMVGYDPEVYSGFAFGLGIERIAMLKYRIDDIRLFYENDQRFLSQF</sequence>
<accession>Q6ANC1</accession>
<gene>
    <name evidence="1" type="primary">pheS</name>
    <name type="ordered locus">DP1424</name>
</gene>
<dbReference type="EC" id="6.1.1.20" evidence="1"/>
<dbReference type="EMBL" id="CR522870">
    <property type="protein sequence ID" value="CAG36153.1"/>
    <property type="molecule type" value="Genomic_DNA"/>
</dbReference>
<dbReference type="RefSeq" id="WP_011188665.1">
    <property type="nucleotide sequence ID" value="NC_006138.1"/>
</dbReference>
<dbReference type="SMR" id="Q6ANC1"/>
<dbReference type="STRING" id="177439.DP1424"/>
<dbReference type="KEGG" id="dps:DP1424"/>
<dbReference type="eggNOG" id="COG0016">
    <property type="taxonomic scope" value="Bacteria"/>
</dbReference>
<dbReference type="HOGENOM" id="CLU_025086_0_1_7"/>
<dbReference type="OrthoDB" id="9800719at2"/>
<dbReference type="Proteomes" id="UP000000602">
    <property type="component" value="Chromosome"/>
</dbReference>
<dbReference type="GO" id="GO:0005737">
    <property type="term" value="C:cytoplasm"/>
    <property type="evidence" value="ECO:0007669"/>
    <property type="project" value="UniProtKB-SubCell"/>
</dbReference>
<dbReference type="GO" id="GO:0005524">
    <property type="term" value="F:ATP binding"/>
    <property type="evidence" value="ECO:0007669"/>
    <property type="project" value="UniProtKB-UniRule"/>
</dbReference>
<dbReference type="GO" id="GO:0000287">
    <property type="term" value="F:magnesium ion binding"/>
    <property type="evidence" value="ECO:0007669"/>
    <property type="project" value="UniProtKB-UniRule"/>
</dbReference>
<dbReference type="GO" id="GO:0004826">
    <property type="term" value="F:phenylalanine-tRNA ligase activity"/>
    <property type="evidence" value="ECO:0007669"/>
    <property type="project" value="UniProtKB-UniRule"/>
</dbReference>
<dbReference type="GO" id="GO:0000049">
    <property type="term" value="F:tRNA binding"/>
    <property type="evidence" value="ECO:0007669"/>
    <property type="project" value="InterPro"/>
</dbReference>
<dbReference type="GO" id="GO:0006432">
    <property type="term" value="P:phenylalanyl-tRNA aminoacylation"/>
    <property type="evidence" value="ECO:0007669"/>
    <property type="project" value="UniProtKB-UniRule"/>
</dbReference>
<dbReference type="CDD" id="cd00496">
    <property type="entry name" value="PheRS_alpha_core"/>
    <property type="match status" value="1"/>
</dbReference>
<dbReference type="FunFam" id="3.30.930.10:FF:000003">
    <property type="entry name" value="Phenylalanine--tRNA ligase alpha subunit"/>
    <property type="match status" value="1"/>
</dbReference>
<dbReference type="Gene3D" id="3.30.930.10">
    <property type="entry name" value="Bira Bifunctional Protein, Domain 2"/>
    <property type="match status" value="1"/>
</dbReference>
<dbReference type="HAMAP" id="MF_00281">
    <property type="entry name" value="Phe_tRNA_synth_alpha1"/>
    <property type="match status" value="1"/>
</dbReference>
<dbReference type="InterPro" id="IPR006195">
    <property type="entry name" value="aa-tRNA-synth_II"/>
</dbReference>
<dbReference type="InterPro" id="IPR045864">
    <property type="entry name" value="aa-tRNA-synth_II/BPL/LPL"/>
</dbReference>
<dbReference type="InterPro" id="IPR004529">
    <property type="entry name" value="Phe-tRNA-synth_IIc_asu"/>
</dbReference>
<dbReference type="InterPro" id="IPR004188">
    <property type="entry name" value="Phe-tRNA_ligase_II_N"/>
</dbReference>
<dbReference type="InterPro" id="IPR022911">
    <property type="entry name" value="Phe_tRNA_ligase_alpha1_bac"/>
</dbReference>
<dbReference type="InterPro" id="IPR002319">
    <property type="entry name" value="Phenylalanyl-tRNA_Synthase"/>
</dbReference>
<dbReference type="InterPro" id="IPR010978">
    <property type="entry name" value="tRNA-bd_arm"/>
</dbReference>
<dbReference type="NCBIfam" id="TIGR00468">
    <property type="entry name" value="pheS"/>
    <property type="match status" value="1"/>
</dbReference>
<dbReference type="PANTHER" id="PTHR11538:SF41">
    <property type="entry name" value="PHENYLALANINE--TRNA LIGASE, MITOCHONDRIAL"/>
    <property type="match status" value="1"/>
</dbReference>
<dbReference type="PANTHER" id="PTHR11538">
    <property type="entry name" value="PHENYLALANYL-TRNA SYNTHETASE"/>
    <property type="match status" value="1"/>
</dbReference>
<dbReference type="Pfam" id="PF02912">
    <property type="entry name" value="Phe_tRNA-synt_N"/>
    <property type="match status" value="1"/>
</dbReference>
<dbReference type="Pfam" id="PF01409">
    <property type="entry name" value="tRNA-synt_2d"/>
    <property type="match status" value="1"/>
</dbReference>
<dbReference type="SUPFAM" id="SSF55681">
    <property type="entry name" value="Class II aaRS and biotin synthetases"/>
    <property type="match status" value="1"/>
</dbReference>
<dbReference type="SUPFAM" id="SSF46589">
    <property type="entry name" value="tRNA-binding arm"/>
    <property type="match status" value="1"/>
</dbReference>
<dbReference type="PROSITE" id="PS50862">
    <property type="entry name" value="AA_TRNA_LIGASE_II"/>
    <property type="match status" value="1"/>
</dbReference>
<reference key="1">
    <citation type="journal article" date="2004" name="Environ. Microbiol.">
        <title>The genome of Desulfotalea psychrophila, a sulfate-reducing bacterium from permanently cold Arctic sediments.</title>
        <authorList>
            <person name="Rabus R."/>
            <person name="Ruepp A."/>
            <person name="Frickey T."/>
            <person name="Rattei T."/>
            <person name="Fartmann B."/>
            <person name="Stark M."/>
            <person name="Bauer M."/>
            <person name="Zibat A."/>
            <person name="Lombardot T."/>
            <person name="Becker I."/>
            <person name="Amann J."/>
            <person name="Gellner K."/>
            <person name="Teeling H."/>
            <person name="Leuschner W.D."/>
            <person name="Gloeckner F.-O."/>
            <person name="Lupas A.N."/>
            <person name="Amann R."/>
            <person name="Klenk H.-P."/>
        </authorList>
    </citation>
    <scope>NUCLEOTIDE SEQUENCE [LARGE SCALE GENOMIC DNA]</scope>
    <source>
        <strain>DSM 12343 / LSv54</strain>
    </source>
</reference>
<proteinExistence type="inferred from homology"/>
<feature type="chain" id="PRO_0000126699" description="Phenylalanine--tRNA ligase alpha subunit">
    <location>
        <begin position="1"/>
        <end position="338"/>
    </location>
</feature>
<feature type="region of interest" description="Disordered" evidence="2">
    <location>
        <begin position="71"/>
        <end position="101"/>
    </location>
</feature>
<feature type="compositionally biased region" description="Low complexity" evidence="2">
    <location>
        <begin position="78"/>
        <end position="92"/>
    </location>
</feature>
<feature type="binding site" evidence="1">
    <location>
        <position position="253"/>
    </location>
    <ligand>
        <name>Mg(2+)</name>
        <dbReference type="ChEBI" id="CHEBI:18420"/>
        <note>shared with beta subunit</note>
    </ligand>
</feature>
<evidence type="ECO:0000255" key="1">
    <source>
        <dbReference type="HAMAP-Rule" id="MF_00281"/>
    </source>
</evidence>
<evidence type="ECO:0000256" key="2">
    <source>
        <dbReference type="SAM" id="MobiDB-lite"/>
    </source>
</evidence>
<name>SYFA_DESPS</name>